<sequence length="672" mass="76269">MTPSQVTFEIRGTLLPGEVFAMCGNCDALGNWSPQNAVPLTESETGESVWKAVIVLSRGMSVKYRYFRGCFLEPKTIGGPCQVIVHKWETHLQPRSITPLENEIIIDDGQFGIHNGVETLDSGWLTCQTEIRLRLHFSEKPPVSITKKKFKKSRFRVKLTLEGLEEDDDDDDKASPTVLHKMSNSLEISLISDNEFKCRHSQPECGYGLQPDRWTEYSIQTMEPDNLELIFDFFEEDLSEHVVQGDVLPGHVGTACLLSSTIAESERSAGILTLPIMSRSSRKTIGKVRVDFIIIKPLPGYSCSMQSSFSKYWKPRIPLDVGHRGAGNSTTTAKLAKVQENTIASLRNAASHGAAFVEFDVHLSKDLVPVVYHDLTCCLTMKRKYEADPVELFEIPVKELTFDQLQLLKLSHVTALKTKDQKQCMAEEENSFSENQPFPSLKMVLESLPENVGFNIEIKWICQHRDGVWDGNLSTYFDMNAFLDIILKTVLENSGKRRIVFSSFDADICTMVRQKQNKYPILFLTQGKSDIYPELMDLRSRTTPIAMSFAQFENILGINAHTEDLLRNPSYVQEAKDKGLVIFCWGDDTNDPENRRKLKEFGVNGLIYDRIYDWMPEQPNIFQVEQLERLKRELPELKNCLCPTVSHFIPPSFCMESKIHVDANGIDNVENA</sequence>
<accession>Q80VJ4</accession>
<dbReference type="EC" id="3.1.4.2"/>
<dbReference type="EMBL" id="AY233980">
    <property type="protein sequence ID" value="AAO84024.1"/>
    <property type="molecule type" value="mRNA"/>
</dbReference>
<dbReference type="RefSeq" id="NP_942074.1">
    <property type="nucleotide sequence ID" value="NM_198779.2"/>
</dbReference>
<dbReference type="RefSeq" id="XP_063140236.1">
    <property type="nucleotide sequence ID" value="XM_063284166.1"/>
</dbReference>
<dbReference type="SMR" id="Q80VJ4"/>
<dbReference type="FunCoup" id="Q80VJ4">
    <property type="interactions" value="2026"/>
</dbReference>
<dbReference type="STRING" id="10116.ENSRNOP00000074931"/>
<dbReference type="BindingDB" id="Q80VJ4"/>
<dbReference type="CAZy" id="CBM20">
    <property type="family name" value="Carbohydrate-Binding Module Family 20"/>
</dbReference>
<dbReference type="iPTMnet" id="Q80VJ4"/>
<dbReference type="PhosphoSitePlus" id="Q80VJ4"/>
<dbReference type="PaxDb" id="10116-ENSRNOP00000028890"/>
<dbReference type="GeneID" id="362219"/>
<dbReference type="KEGG" id="rno:362219"/>
<dbReference type="UCSC" id="RGD:735140">
    <property type="organism name" value="rat"/>
</dbReference>
<dbReference type="AGR" id="RGD:735140"/>
<dbReference type="CTD" id="56261"/>
<dbReference type="RGD" id="735140">
    <property type="gene designation" value="Gpcpd1"/>
</dbReference>
<dbReference type="eggNOG" id="KOG2421">
    <property type="taxonomic scope" value="Eukaryota"/>
</dbReference>
<dbReference type="InParanoid" id="Q80VJ4"/>
<dbReference type="PhylomeDB" id="Q80VJ4"/>
<dbReference type="PRO" id="PR:Q80VJ4"/>
<dbReference type="Proteomes" id="UP000002494">
    <property type="component" value="Unplaced"/>
</dbReference>
<dbReference type="GO" id="GO:0005737">
    <property type="term" value="C:cytoplasm"/>
    <property type="evidence" value="ECO:0000266"/>
    <property type="project" value="RGD"/>
</dbReference>
<dbReference type="GO" id="GO:0005829">
    <property type="term" value="C:cytosol"/>
    <property type="evidence" value="ECO:0007669"/>
    <property type="project" value="UniProtKB-SubCell"/>
</dbReference>
<dbReference type="GO" id="GO:0047389">
    <property type="term" value="F:glycerophosphocholine phosphodiesterase activity"/>
    <property type="evidence" value="ECO:0000266"/>
    <property type="project" value="RGD"/>
</dbReference>
<dbReference type="GO" id="GO:2001070">
    <property type="term" value="F:starch binding"/>
    <property type="evidence" value="ECO:0007669"/>
    <property type="project" value="InterPro"/>
</dbReference>
<dbReference type="GO" id="GO:0046475">
    <property type="term" value="P:glycerophospholipid catabolic process"/>
    <property type="evidence" value="ECO:0000318"/>
    <property type="project" value="GO_Central"/>
</dbReference>
<dbReference type="GO" id="GO:0007519">
    <property type="term" value="P:skeletal muscle tissue development"/>
    <property type="evidence" value="ECO:0000266"/>
    <property type="project" value="RGD"/>
</dbReference>
<dbReference type="CDD" id="cd05814">
    <property type="entry name" value="CBM20_Prei4"/>
    <property type="match status" value="1"/>
</dbReference>
<dbReference type="CDD" id="cd08607">
    <property type="entry name" value="GDPD_GDE5"/>
    <property type="match status" value="1"/>
</dbReference>
<dbReference type="FunFam" id="3.20.20.190:FF:000015">
    <property type="entry name" value="Glycerophosphocholine phosphodiesterase GPCPD1"/>
    <property type="match status" value="1"/>
</dbReference>
<dbReference type="FunFam" id="2.60.40.10:FF:000752">
    <property type="entry name" value="Putative glycerophosphocholine phosphodiesterase GPCPD1"/>
    <property type="match status" value="1"/>
</dbReference>
<dbReference type="Gene3D" id="2.60.40.10">
    <property type="entry name" value="Immunoglobulins"/>
    <property type="match status" value="1"/>
</dbReference>
<dbReference type="Gene3D" id="3.20.20.190">
    <property type="entry name" value="Phosphatidylinositol (PI) phosphodiesterase"/>
    <property type="match status" value="1"/>
</dbReference>
<dbReference type="InterPro" id="IPR013784">
    <property type="entry name" value="Carb-bd-like_fold"/>
</dbReference>
<dbReference type="InterPro" id="IPR002044">
    <property type="entry name" value="CBM20"/>
</dbReference>
<dbReference type="InterPro" id="IPR034839">
    <property type="entry name" value="CBM20_GPCPD1"/>
</dbReference>
<dbReference type="InterPro" id="IPR051578">
    <property type="entry name" value="GDPD"/>
</dbReference>
<dbReference type="InterPro" id="IPR030395">
    <property type="entry name" value="GP_PDE_dom"/>
</dbReference>
<dbReference type="InterPro" id="IPR013783">
    <property type="entry name" value="Ig-like_fold"/>
</dbReference>
<dbReference type="InterPro" id="IPR017946">
    <property type="entry name" value="PLC-like_Pdiesterase_TIM-brl"/>
</dbReference>
<dbReference type="PANTHER" id="PTHR22958:SF1">
    <property type="entry name" value="GLYCEROPHOSPHOCHOLINE PHOSPHODIESTERASE GPCPD1"/>
    <property type="match status" value="1"/>
</dbReference>
<dbReference type="PANTHER" id="PTHR22958">
    <property type="entry name" value="GLYCEROPHOSPHORYL DIESTER PHOSPHODIESTERASE"/>
    <property type="match status" value="1"/>
</dbReference>
<dbReference type="Pfam" id="PF25329">
    <property type="entry name" value="C2_GDE1"/>
    <property type="match status" value="1"/>
</dbReference>
<dbReference type="Pfam" id="PF00686">
    <property type="entry name" value="CBM_20"/>
    <property type="match status" value="1"/>
</dbReference>
<dbReference type="Pfam" id="PF03009">
    <property type="entry name" value="GDPD"/>
    <property type="match status" value="1"/>
</dbReference>
<dbReference type="SMART" id="SM01065">
    <property type="entry name" value="CBM_2"/>
    <property type="match status" value="1"/>
</dbReference>
<dbReference type="SUPFAM" id="SSF51695">
    <property type="entry name" value="PLC-like phosphodiesterases"/>
    <property type="match status" value="1"/>
</dbReference>
<dbReference type="SUPFAM" id="SSF49452">
    <property type="entry name" value="Starch-binding domain-like"/>
    <property type="match status" value="1"/>
</dbReference>
<dbReference type="PROSITE" id="PS51166">
    <property type="entry name" value="CBM20"/>
    <property type="match status" value="1"/>
</dbReference>
<dbReference type="PROSITE" id="PS51704">
    <property type="entry name" value="GP_PDE"/>
    <property type="match status" value="1"/>
</dbReference>
<name>GPCP1_RAT</name>
<proteinExistence type="evidence at protein level"/>
<protein>
    <recommendedName>
        <fullName>Glycerophosphocholine phosphodiesterase GPCPD1</fullName>
        <ecNumber>3.1.4.2</ecNumber>
    </recommendedName>
    <alternativeName>
        <fullName>Glycerophosphodiester phosphodiesterase 5</fullName>
    </alternativeName>
</protein>
<reference key="1">
    <citation type="submission" date="2003-02" db="EMBL/GenBank/DDBJ databases">
        <title>Blood-brain barrier genomics.</title>
        <authorList>
            <person name="Li J.Y."/>
            <person name="Boado R.J."/>
            <person name="Pardridge W.M."/>
        </authorList>
    </citation>
    <scope>NUCLEOTIDE SEQUENCE [MRNA]</scope>
    <source>
        <strain>Sprague-Dawley</strain>
        <tissue>Brain capillary</tissue>
    </source>
</reference>
<reference key="2">
    <citation type="journal article" date="2012" name="Nat. Commun.">
        <title>Quantitative maps of protein phosphorylation sites across 14 different rat organs and tissues.</title>
        <authorList>
            <person name="Lundby A."/>
            <person name="Secher A."/>
            <person name="Lage K."/>
            <person name="Nordsborg N.B."/>
            <person name="Dmytriyev A."/>
            <person name="Lundby C."/>
            <person name="Olsen J.V."/>
        </authorList>
    </citation>
    <scope>PHOSPHORYLATION [LARGE SCALE ANALYSIS] AT SER-175</scope>
    <scope>IDENTIFICATION BY MASS SPECTROMETRY [LARGE SCALE ANALYSIS]</scope>
</reference>
<feature type="chain" id="PRO_0000251948" description="Glycerophosphocholine phosphodiesterase GPCPD1">
    <location>
        <begin position="1"/>
        <end position="672"/>
    </location>
</feature>
<feature type="domain" description="CBM20" evidence="4">
    <location>
        <begin position="1"/>
        <end position="113"/>
    </location>
</feature>
<feature type="domain" description="GP-PDE">
    <location>
        <begin position="318"/>
        <end position="618"/>
    </location>
</feature>
<feature type="binding site" evidence="3">
    <location>
        <position position="68"/>
    </location>
    <ligand>
        <name>substrate</name>
    </ligand>
</feature>
<feature type="binding site" evidence="3">
    <location>
        <begin position="86"/>
        <end position="87"/>
    </location>
    <ligand>
        <name>substrate</name>
    </ligand>
</feature>
<feature type="modified residue" description="Phosphoserine" evidence="6">
    <location>
        <position position="175"/>
    </location>
</feature>
<feature type="modified residue" description="Phosphotyrosine" evidence="2">
    <location>
        <position position="608"/>
    </location>
</feature>
<organism>
    <name type="scientific">Rattus norvegicus</name>
    <name type="common">Rat</name>
    <dbReference type="NCBI Taxonomy" id="10116"/>
    <lineage>
        <taxon>Eukaryota</taxon>
        <taxon>Metazoa</taxon>
        <taxon>Chordata</taxon>
        <taxon>Craniata</taxon>
        <taxon>Vertebrata</taxon>
        <taxon>Euteleostomi</taxon>
        <taxon>Mammalia</taxon>
        <taxon>Eutheria</taxon>
        <taxon>Euarchontoglires</taxon>
        <taxon>Glires</taxon>
        <taxon>Rodentia</taxon>
        <taxon>Myomorpha</taxon>
        <taxon>Muroidea</taxon>
        <taxon>Muridae</taxon>
        <taxon>Murinae</taxon>
        <taxon>Rattus</taxon>
    </lineage>
</organism>
<comment type="function">
    <text evidence="1">May be involved in the negative regulation of skeletal muscle differentiation, independently of its glycerophosphocholine phosphodiesterase activity.</text>
</comment>
<comment type="catalytic activity">
    <reaction>
        <text>sn-glycerol 3-phosphocholine + H2O = sn-glycerol 3-phosphate + choline + H(+)</text>
        <dbReference type="Rhea" id="RHEA:16061"/>
        <dbReference type="ChEBI" id="CHEBI:15354"/>
        <dbReference type="ChEBI" id="CHEBI:15377"/>
        <dbReference type="ChEBI" id="CHEBI:15378"/>
        <dbReference type="ChEBI" id="CHEBI:16870"/>
        <dbReference type="ChEBI" id="CHEBI:57597"/>
        <dbReference type="EC" id="3.1.4.2"/>
    </reaction>
</comment>
<comment type="subcellular location">
    <subcellularLocation>
        <location evidence="1">Cytoplasm</location>
        <location evidence="1">Cytosol</location>
    </subcellularLocation>
</comment>
<comment type="similarity">
    <text evidence="5">Belongs to the glycerophosphoryl diester phosphodiesterase family.</text>
</comment>
<keyword id="KW-0963">Cytoplasm</keyword>
<keyword id="KW-0378">Hydrolase</keyword>
<keyword id="KW-0597">Phosphoprotein</keyword>
<keyword id="KW-1185">Reference proteome</keyword>
<gene>
    <name type="primary">Gpcpd1</name>
    <name type="synonym">Gde5</name>
</gene>
<evidence type="ECO:0000250" key="1"/>
<evidence type="ECO:0000250" key="2">
    <source>
        <dbReference type="UniProtKB" id="Q8C0L9"/>
    </source>
</evidence>
<evidence type="ECO:0000255" key="3"/>
<evidence type="ECO:0000255" key="4">
    <source>
        <dbReference type="PROSITE-ProRule" id="PRU00594"/>
    </source>
</evidence>
<evidence type="ECO:0000305" key="5"/>
<evidence type="ECO:0007744" key="6">
    <source>
    </source>
</evidence>